<name>CLIC5_RAT</name>
<reference key="1">
    <citation type="submission" date="2000-11" db="EMBL/GenBank/DDBJ databases">
        <title>Identification of a rat homolog of the human chloride intracellular channel (CLIC5).</title>
        <authorList>
            <person name="Vanderbilt J."/>
            <person name="Mager E."/>
            <person name="Dobbs L."/>
        </authorList>
    </citation>
    <scope>NUCLEOTIDE SEQUENCE [MRNA]</scope>
    <source>
        <strain>Sprague-Dawley</strain>
        <tissue>Lung</tissue>
    </source>
</reference>
<reference key="2">
    <citation type="journal article" date="2006" name="J. Neurosci.">
        <title>The chloride intracellular channel protein CLIC5 is expressed at high levels in hair cell stereocilia and is essential for normal inner ear function.</title>
        <authorList>
            <person name="Gagnon L.H."/>
            <person name="Longo-Guess C.M."/>
            <person name="Berryman M."/>
            <person name="Shin J.-B."/>
            <person name="Saylor K.W."/>
            <person name="Yu H."/>
            <person name="Gillespie P.G."/>
            <person name="Johnson K.R."/>
        </authorList>
    </citation>
    <scope>SUBCELLULAR LOCATION</scope>
    <scope>TISSUE SPECIFICITY</scope>
</reference>
<reference key="3">
    <citation type="journal article" date="2014" name="Cytoskeleton">
        <title>CLIC5 stabilizes membrane-actin filament linkages at the base of hair cell stereocilia in a molecular complex with radixin, taperin, and myosin VI.</title>
        <authorList>
            <person name="Salles F.T."/>
            <person name="Andrade L.R."/>
            <person name="Tanda S."/>
            <person name="Grati M."/>
            <person name="Plona K.L."/>
            <person name="Gagnon L.H."/>
            <person name="Johnson K.R."/>
            <person name="Kachar B."/>
            <person name="Berryman M.A."/>
        </authorList>
    </citation>
    <scope>SUBCELLULAR LOCATION</scope>
</reference>
<reference evidence="10" key="4">
    <citation type="journal article" date="2016" name="Mitochondrion">
        <title>Molecular identity of cardiac mitochondrial chloride intracellular channel proteins.</title>
        <authorList>
            <person name="Ponnalagu D."/>
            <person name="Gururaja Rao S."/>
            <person name="Farber J."/>
            <person name="Xin W."/>
            <person name="Hussain A.T."/>
            <person name="Shah K."/>
            <person name="Tanda S."/>
            <person name="Berryman M."/>
            <person name="Edwards J.C."/>
            <person name="Singh H."/>
        </authorList>
    </citation>
    <scope>SUBCELLULAR LOCATION</scope>
    <scope>TISSUE SPECIFICITY</scope>
</reference>
<feature type="chain" id="PRO_0000144216" description="Chloride intracellular channel protein 5">
    <location>
        <begin position="1"/>
        <end position="251"/>
    </location>
</feature>
<feature type="transmembrane region" description="Helical; Note=After insertion into the membrane" evidence="5">
    <location>
        <begin position="34"/>
        <end position="54"/>
    </location>
</feature>
<feature type="domain" description="GST C-terminal" evidence="6">
    <location>
        <begin position="101"/>
        <end position="241"/>
    </location>
</feature>
<feature type="region of interest" description="Required for insertion into the membrane" evidence="1">
    <location>
        <begin position="1"/>
        <end position="98"/>
    </location>
</feature>
<feature type="short sequence motif" description="G-site" evidence="2">
    <location>
        <begin position="32"/>
        <end position="35"/>
    </location>
</feature>
<proteinExistence type="evidence at protein level"/>
<sequence length="251" mass="28299">MTDSATANGDDRDPEIELFVKAGIDGESIGNCPFSQRLFMILWLKGVVFNVTTVDLKRKPADLHNLAPGTHPPFLTFNGDVKTDVNKIEEFLEETLTPEKYPKLAARHRESNTAGIDIFSKFSAYIKNTKQQNNAALERGLTKALRKLDDYLNTPLPEEIDTNTHGDEKGSQRKFLDGDELTLADCNLLPKLHVVKIVAKKYRNYDIPAEMTGLWRYLKNAYARDEFTNTCAADSEIELAYADVARRLSRS</sequence>
<keyword id="KW-1003">Cell membrane</keyword>
<keyword id="KW-0966">Cell projection</keyword>
<keyword id="KW-0868">Chloride</keyword>
<keyword id="KW-0869">Chloride channel</keyword>
<keyword id="KW-0963">Cytoplasm</keyword>
<keyword id="KW-0206">Cytoskeleton</keyword>
<keyword id="KW-0333">Golgi apparatus</keyword>
<keyword id="KW-1009">Hearing</keyword>
<keyword id="KW-0407">Ion channel</keyword>
<keyword id="KW-0406">Ion transport</keyword>
<keyword id="KW-0472">Membrane</keyword>
<keyword id="KW-0496">Mitochondrion</keyword>
<keyword id="KW-0560">Oxidoreductase</keyword>
<keyword id="KW-1185">Reference proteome</keyword>
<keyword id="KW-0716">Sensory transduction</keyword>
<keyword id="KW-0812">Transmembrane</keyword>
<keyword id="KW-1133">Transmembrane helix</keyword>
<keyword id="KW-0813">Transport</keyword>
<keyword id="KW-0844">Vision</keyword>
<keyword id="KW-0851">Voltage-gated channel</keyword>
<evidence type="ECO:0000250" key="1"/>
<evidence type="ECO:0000250" key="2">
    <source>
        <dbReference type="UniProtKB" id="O00299"/>
    </source>
</evidence>
<evidence type="ECO:0000250" key="3">
    <source>
        <dbReference type="UniProtKB" id="Q8BXK9"/>
    </source>
</evidence>
<evidence type="ECO:0000250" key="4">
    <source>
        <dbReference type="UniProtKB" id="Q9NZA1"/>
    </source>
</evidence>
<evidence type="ECO:0000255" key="5"/>
<evidence type="ECO:0000255" key="6">
    <source>
        <dbReference type="PROSITE-ProRule" id="PRU00685"/>
    </source>
</evidence>
<evidence type="ECO:0000269" key="7">
    <source>
    </source>
</evidence>
<evidence type="ECO:0000269" key="8">
    <source>
    </source>
</evidence>
<evidence type="ECO:0000269" key="9">
    <source>
    </source>
</evidence>
<evidence type="ECO:0000305" key="10"/>
<protein>
    <recommendedName>
        <fullName>Chloride intracellular channel protein 5</fullName>
    </recommendedName>
    <alternativeName>
        <fullName evidence="2">Glutaredoxin-like oxidoreductase CLIC5</fullName>
        <ecNumber evidence="2">1.8.-.-</ecNumber>
    </alternativeName>
</protein>
<accession>Q9EPT8</accession>
<comment type="function">
    <text evidence="2 3 4">In the soluble state, catalyzes glutaredoxin-like thiol disulfide exchange reactions with reduced glutathione as electron donor (By similarity). Can insert into membranes and form non-selective ion channels almost equally permeable to Na(+), K(+) and Cl(-) (By similarity). Required for normal hearing (By similarity). It is necessary for the formation of stereocilia in the inner ear and normal development of the organ of Corti (By similarity). May play a role in the regulation of transepithelial ion absorption and secretion. Is required for the development and/or maintenance of the proper glomerular endothelial cell and podocyte architecture (By similarity). Plays a role in formation of the lens suture in the eye, which is important for normal optical properties of the lens (By similarity).</text>
</comment>
<comment type="catalytic activity">
    <reaction evidence="4">
        <text>Na(+)(in) = Na(+)(out)</text>
        <dbReference type="Rhea" id="RHEA:34963"/>
        <dbReference type="ChEBI" id="CHEBI:29101"/>
    </reaction>
</comment>
<comment type="catalytic activity">
    <reaction evidence="4">
        <text>K(+)(in) = K(+)(out)</text>
        <dbReference type="Rhea" id="RHEA:29463"/>
        <dbReference type="ChEBI" id="CHEBI:29103"/>
    </reaction>
</comment>
<comment type="catalytic activity">
    <reaction evidence="4">
        <text>chloride(in) = chloride(out)</text>
        <dbReference type="Rhea" id="RHEA:29823"/>
        <dbReference type="ChEBI" id="CHEBI:17996"/>
    </reaction>
</comment>
<comment type="activity regulation">
    <text evidence="4">Inhibited by F-actin.</text>
</comment>
<comment type="subunit">
    <text evidence="3 4">Component of a multimeric complex consisting of several cytoskeletal proteins, including actin, ezrin, alpha-actinin, gelsolin, and IQGAP1. Interacts with AKAP9. Interacts with TPRN. TPRN, CLIC5 and PTPQR form concentric rings at the base of stereocilia and may form a complex. Interacts with EZR, MYO6 and RDX; the proteins may work together as a complex to stabilize linkages between the plasma membrane and subjacent actin cytoskeleton at the stereocilium base.</text>
</comment>
<comment type="subcellular location">
    <subcellularLocation>
        <location evidence="4">Golgi apparatus</location>
    </subcellularLocation>
    <subcellularLocation>
        <location evidence="4">Cytoplasm</location>
        <location evidence="4">Cytoskeleton</location>
        <location evidence="4">Microtubule organizing center</location>
        <location evidence="4">Centrosome</location>
    </subcellularLocation>
    <subcellularLocation>
        <location evidence="4">Cytoplasm</location>
        <location evidence="4">Cytoskeleton</location>
    </subcellularLocation>
    <subcellularLocation>
        <location evidence="4">Cytoplasm</location>
        <location evidence="4">Cell cortex</location>
    </subcellularLocation>
    <subcellularLocation>
        <location evidence="4">Membrane</location>
        <topology evidence="5">Single-pass membrane protein</topology>
    </subcellularLocation>
    <subcellularLocation>
        <location evidence="7 8">Apical cell membrane</location>
        <topology evidence="5">Single-pass membrane protein</topology>
    </subcellularLocation>
    <subcellularLocation>
        <location evidence="2">Cytoplasm</location>
    </subcellularLocation>
    <subcellularLocation>
        <location evidence="9">Mitochondrion</location>
    </subcellularLocation>
    <subcellularLocation>
        <location evidence="8">Cell projection</location>
        <location evidence="8">Stereocilium</location>
    </subcellularLocation>
    <text evidence="2 3 4 7 9">Colocalizes with AKAP9 at the Golgi apparatus as well as, to a lesser extent, the centrosome (By similarity). Associates with the cortical actin cytoskeleton (By similarity). Localizes to the apical region of cochlear hair cells, at the base of the actin-rich hair bundle (PubMed:17021174). Colocalizes with podocalyxin at the apical cell membrane in renal glomeruli (By similarity). May localize to the centrosome in lens epithelial cells (By similarity). Exists both as soluble cytoplasmic protein and as membrane protein with probably a single transmembrane domain (By similarity).</text>
</comment>
<comment type="tissue specificity">
    <text evidence="7 9">Detected in cochlea, in cochlear and vestibular hair cell bundles in the organ of Corti (at protein level) (PubMed:17021174). Expressed neonatal and adult cardiomyocytes (at protein level) (PubMed:26777142).</text>
</comment>
<comment type="domain">
    <text evidence="2">The active G-site contains a monothiol Cys-X-X-Ser motif which mediates glutathione-dependent redox catalysis.</text>
</comment>
<comment type="domain">
    <text evidence="2">Members of this family may change from a globular, soluble state to a state where the N-terminal domain is inserted into the membrane and functions as a chloride channel. The redox status of the active cysteine in Cys-X-X-Cys/Ser motif likely determines the capacity to adopt a soluble or membrane-inserted state. A conformation change of the N-terminal domain is thought to expose hydrophobic surfaces that trigger membrane insertion (By similarity).</text>
</comment>
<comment type="similarity">
    <text evidence="10">Belongs to the chloride channel CLIC family.</text>
</comment>
<gene>
    <name type="primary">Clic5</name>
</gene>
<organism>
    <name type="scientific">Rattus norvegicus</name>
    <name type="common">Rat</name>
    <dbReference type="NCBI Taxonomy" id="10116"/>
    <lineage>
        <taxon>Eukaryota</taxon>
        <taxon>Metazoa</taxon>
        <taxon>Chordata</taxon>
        <taxon>Craniata</taxon>
        <taxon>Vertebrata</taxon>
        <taxon>Euteleostomi</taxon>
        <taxon>Mammalia</taxon>
        <taxon>Eutheria</taxon>
        <taxon>Euarchontoglires</taxon>
        <taxon>Glires</taxon>
        <taxon>Rodentia</taxon>
        <taxon>Myomorpha</taxon>
        <taxon>Muroidea</taxon>
        <taxon>Muridae</taxon>
        <taxon>Murinae</taxon>
        <taxon>Rattus</taxon>
    </lineage>
</organism>
<dbReference type="EC" id="1.8.-.-" evidence="2"/>
<dbReference type="EMBL" id="AF323174">
    <property type="protein sequence ID" value="AAG49367.1"/>
    <property type="molecule type" value="mRNA"/>
</dbReference>
<dbReference type="RefSeq" id="NP_446055.1">
    <property type="nucleotide sequence ID" value="NM_053603.4"/>
</dbReference>
<dbReference type="SMR" id="Q9EPT8"/>
<dbReference type="BioGRID" id="250191">
    <property type="interactions" value="1"/>
</dbReference>
<dbReference type="FunCoup" id="Q9EPT8">
    <property type="interactions" value="756"/>
</dbReference>
<dbReference type="STRING" id="10116.ENSRNOP00000072035"/>
<dbReference type="iPTMnet" id="Q9EPT8"/>
<dbReference type="PhosphoSitePlus" id="Q9EPT8"/>
<dbReference type="jPOST" id="Q9EPT8"/>
<dbReference type="PaxDb" id="10116-ENSRNOP00000067890"/>
<dbReference type="Ensembl" id="ENSRNOT00000079517.2">
    <property type="protein sequence ID" value="ENSRNOP00000072035.1"/>
    <property type="gene ID" value="ENSRNOG00000047218.3"/>
</dbReference>
<dbReference type="GeneID" id="94272"/>
<dbReference type="KEGG" id="rno:94272"/>
<dbReference type="UCSC" id="RGD:620659">
    <property type="organism name" value="rat"/>
</dbReference>
<dbReference type="AGR" id="RGD:620659"/>
<dbReference type="CTD" id="53405"/>
<dbReference type="RGD" id="620659">
    <property type="gene designation" value="Clic5"/>
</dbReference>
<dbReference type="eggNOG" id="KOG1422">
    <property type="taxonomic scope" value="Eukaryota"/>
</dbReference>
<dbReference type="GeneTree" id="ENSGT00940000156406"/>
<dbReference type="HOGENOM" id="CLU_061051_1_0_1"/>
<dbReference type="InParanoid" id="Q9EPT8"/>
<dbReference type="OMA" id="RCENSIE"/>
<dbReference type="OrthoDB" id="1935530at2759"/>
<dbReference type="PhylomeDB" id="Q9EPT8"/>
<dbReference type="TreeFam" id="TF315438"/>
<dbReference type="PRO" id="PR:Q9EPT8"/>
<dbReference type="Proteomes" id="UP000002494">
    <property type="component" value="Chromosome 9"/>
</dbReference>
<dbReference type="Bgee" id="ENSRNOG00000047218">
    <property type="expression patterns" value="Expressed in lung and 18 other cell types or tissues"/>
</dbReference>
<dbReference type="GO" id="GO:0015629">
    <property type="term" value="C:actin cytoskeleton"/>
    <property type="evidence" value="ECO:0000250"/>
    <property type="project" value="UniProtKB"/>
</dbReference>
<dbReference type="GO" id="GO:0016324">
    <property type="term" value="C:apical plasma membrane"/>
    <property type="evidence" value="ECO:0000314"/>
    <property type="project" value="UniProtKB"/>
</dbReference>
<dbReference type="GO" id="GO:0005938">
    <property type="term" value="C:cell cortex"/>
    <property type="evidence" value="ECO:0007669"/>
    <property type="project" value="UniProtKB-SubCell"/>
</dbReference>
<dbReference type="GO" id="GO:0005813">
    <property type="term" value="C:centrosome"/>
    <property type="evidence" value="ECO:0007669"/>
    <property type="project" value="UniProtKB-SubCell"/>
</dbReference>
<dbReference type="GO" id="GO:0034707">
    <property type="term" value="C:chloride channel complex"/>
    <property type="evidence" value="ECO:0007669"/>
    <property type="project" value="UniProtKB-KW"/>
</dbReference>
<dbReference type="GO" id="GO:0005737">
    <property type="term" value="C:cytoplasm"/>
    <property type="evidence" value="ECO:0000318"/>
    <property type="project" value="GO_Central"/>
</dbReference>
<dbReference type="GO" id="GO:0005794">
    <property type="term" value="C:Golgi apparatus"/>
    <property type="evidence" value="ECO:0007669"/>
    <property type="project" value="UniProtKB-SubCell"/>
</dbReference>
<dbReference type="GO" id="GO:0016020">
    <property type="term" value="C:membrane"/>
    <property type="evidence" value="ECO:0000318"/>
    <property type="project" value="GO_Central"/>
</dbReference>
<dbReference type="GO" id="GO:0005743">
    <property type="term" value="C:mitochondrial inner membrane"/>
    <property type="evidence" value="ECO:0000314"/>
    <property type="project" value="FlyBase"/>
</dbReference>
<dbReference type="GO" id="GO:0032420">
    <property type="term" value="C:stereocilium"/>
    <property type="evidence" value="ECO:0000266"/>
    <property type="project" value="RGD"/>
</dbReference>
<dbReference type="GO" id="GO:0120044">
    <property type="term" value="C:stereocilium base"/>
    <property type="evidence" value="ECO:0000314"/>
    <property type="project" value="UniProtKB"/>
</dbReference>
<dbReference type="GO" id="GO:0032421">
    <property type="term" value="C:stereocilium bundle"/>
    <property type="evidence" value="ECO:0000314"/>
    <property type="project" value="MGI"/>
</dbReference>
<dbReference type="GO" id="GO:0005254">
    <property type="term" value="F:chloride channel activity"/>
    <property type="evidence" value="ECO:0000314"/>
    <property type="project" value="RGD"/>
</dbReference>
<dbReference type="GO" id="GO:0016491">
    <property type="term" value="F:oxidoreductase activity"/>
    <property type="evidence" value="ECO:0007669"/>
    <property type="project" value="UniProtKB-KW"/>
</dbReference>
<dbReference type="GO" id="GO:0060088">
    <property type="term" value="P:auditory receptor cell stereocilium organization"/>
    <property type="evidence" value="ECO:0000266"/>
    <property type="project" value="RGD"/>
</dbReference>
<dbReference type="GO" id="GO:0006821">
    <property type="term" value="P:chloride transport"/>
    <property type="evidence" value="ECO:0000266"/>
    <property type="project" value="RGD"/>
</dbReference>
<dbReference type="GO" id="GO:0002024">
    <property type="term" value="P:diet induced thermogenesis"/>
    <property type="evidence" value="ECO:0000266"/>
    <property type="project" value="RGD"/>
</dbReference>
<dbReference type="GO" id="GO:0060122">
    <property type="term" value="P:inner ear receptor cell stereocilium organization"/>
    <property type="evidence" value="ECO:0000266"/>
    <property type="project" value="RGD"/>
</dbReference>
<dbReference type="GO" id="GO:0050885">
    <property type="term" value="P:neuromuscular process controlling balance"/>
    <property type="evidence" value="ECO:0000266"/>
    <property type="project" value="RGD"/>
</dbReference>
<dbReference type="GO" id="GO:0008104">
    <property type="term" value="P:protein localization"/>
    <property type="evidence" value="ECO:0000266"/>
    <property type="project" value="RGD"/>
</dbReference>
<dbReference type="GO" id="GO:0002021">
    <property type="term" value="P:response to dietary excess"/>
    <property type="evidence" value="ECO:0000266"/>
    <property type="project" value="RGD"/>
</dbReference>
<dbReference type="GO" id="GO:0007605">
    <property type="term" value="P:sensory perception of sound"/>
    <property type="evidence" value="ECO:0000250"/>
    <property type="project" value="UniProtKB"/>
</dbReference>
<dbReference type="GO" id="GO:0007601">
    <property type="term" value="P:visual perception"/>
    <property type="evidence" value="ECO:0007669"/>
    <property type="project" value="UniProtKB-KW"/>
</dbReference>
<dbReference type="CDD" id="cd10297">
    <property type="entry name" value="GST_C_CLIC5"/>
    <property type="match status" value="1"/>
</dbReference>
<dbReference type="CDD" id="cd03061">
    <property type="entry name" value="GST_N_CLIC"/>
    <property type="match status" value="1"/>
</dbReference>
<dbReference type="FunFam" id="1.20.1050.10:FF:000001">
    <property type="entry name" value="Chloride intracellular channel 2"/>
    <property type="match status" value="1"/>
</dbReference>
<dbReference type="FunFam" id="3.40.30.10:FF:000021">
    <property type="entry name" value="Chloride intracellular channel 4"/>
    <property type="match status" value="1"/>
</dbReference>
<dbReference type="Gene3D" id="1.20.1050.10">
    <property type="match status" value="1"/>
</dbReference>
<dbReference type="Gene3D" id="3.40.30.10">
    <property type="entry name" value="Glutaredoxin"/>
    <property type="match status" value="1"/>
</dbReference>
<dbReference type="InterPro" id="IPR002946">
    <property type="entry name" value="CLIC"/>
</dbReference>
<dbReference type="InterPro" id="IPR042069">
    <property type="entry name" value="CLIC5_C_GST"/>
</dbReference>
<dbReference type="InterPro" id="IPR053823">
    <property type="entry name" value="CLIC_N"/>
</dbReference>
<dbReference type="InterPro" id="IPR010987">
    <property type="entry name" value="Glutathione-S-Trfase_C-like"/>
</dbReference>
<dbReference type="InterPro" id="IPR036282">
    <property type="entry name" value="Glutathione-S-Trfase_C_sf"/>
</dbReference>
<dbReference type="InterPro" id="IPR040079">
    <property type="entry name" value="Glutathione_S-Trfase"/>
</dbReference>
<dbReference type="InterPro" id="IPR036249">
    <property type="entry name" value="Thioredoxin-like_sf"/>
</dbReference>
<dbReference type="NCBIfam" id="TIGR00862">
    <property type="entry name" value="O-ClC"/>
    <property type="match status" value="1"/>
</dbReference>
<dbReference type="PANTHER" id="PTHR45476:SF4">
    <property type="entry name" value="CHLORIDE INTRACELLULAR CHANNEL PROTEIN 5"/>
    <property type="match status" value="1"/>
</dbReference>
<dbReference type="PANTHER" id="PTHR45476">
    <property type="entry name" value="CHLORIDE INTRACELLULAR CHANNEL PROTEIN 6-RELATED"/>
    <property type="match status" value="1"/>
</dbReference>
<dbReference type="Pfam" id="PF22441">
    <property type="entry name" value="CLIC-like_N"/>
    <property type="match status" value="1"/>
</dbReference>
<dbReference type="Pfam" id="PF13410">
    <property type="entry name" value="GST_C_2"/>
    <property type="match status" value="1"/>
</dbReference>
<dbReference type="PRINTS" id="PR01263">
    <property type="entry name" value="INTCLCHANNEL"/>
</dbReference>
<dbReference type="SFLD" id="SFLDS00019">
    <property type="entry name" value="Glutathione_Transferase_(cytos"/>
    <property type="match status" value="1"/>
</dbReference>
<dbReference type="SFLD" id="SFLDG00358">
    <property type="entry name" value="Main_(cytGST)"/>
    <property type="match status" value="1"/>
</dbReference>
<dbReference type="SUPFAM" id="SSF47616">
    <property type="entry name" value="GST C-terminal domain-like"/>
    <property type="match status" value="1"/>
</dbReference>
<dbReference type="SUPFAM" id="SSF52833">
    <property type="entry name" value="Thioredoxin-like"/>
    <property type="match status" value="1"/>
</dbReference>
<dbReference type="PROSITE" id="PS50405">
    <property type="entry name" value="GST_CTER"/>
    <property type="match status" value="1"/>
</dbReference>